<keyword id="KW-1003">Cell membrane</keyword>
<keyword id="KW-0472">Membrane</keyword>
<keyword id="KW-0677">Repeat</keyword>
<keyword id="KW-0812">Transmembrane</keyword>
<keyword id="KW-1133">Transmembrane helix</keyword>
<keyword id="KW-0813">Transport</keyword>
<name>YBJL_SALHS</name>
<comment type="subcellular location">
    <subcellularLocation>
        <location evidence="1">Cell membrane</location>
        <topology evidence="1">Multi-pass membrane protein</topology>
    </subcellularLocation>
</comment>
<comment type="similarity">
    <text evidence="1">Belongs to the AAE transporter (TC 2.A.81) family. YbjL subfamily.</text>
</comment>
<accession>B4TCW8</accession>
<sequence>MNINVADLLNGNYILLLFVVLALGLCLGKLRLGSVQLGNSIGVLVVSLLLGQQHFSINTDALNLGFMLFIFCVGVEAGPNFFSIFFRDGKNYLMLALVMVGSALLIALGLGKLFGWDIGLTAGMLAGSMTSTPVLVGAGDTLRHSGIASTQLSSALDNLSLGYALTYLIGLVSLIVGARYLPKLQHQDLQTSAQQIARERGLDTDANRKVYLPVIRAYRVGPELVAWTDGKNLRELGIYRQTGCYIERIRRNGILANPDGDAVLQMGDEIALVGYPDAHARLDPSFRNGKEVFDRDLLDMRIVTEEIVVKNHNAVGRRLAQLKLTDHGCFLNRVIRSQIEMPIDDNVVLNKGDVLQVSGDARRVKTIADRIGFISIHSQVTDLLAFCAFFIIGLMIGMITFQFSNFSFGIGNAAGLLFAGIMLGFLRANHPTFGYIPQGALNMVKEFGLMVFMAGVGLSAGSGISNGLGAVGGQMLIAGLVVSLVPVVICFLFGAYVLRMNRALLFGAMMGARTCAPAMEIISDTARSNIPALGYAGTYAIANVLLTLAGTLIVIIWPGLG</sequence>
<evidence type="ECO:0000255" key="1">
    <source>
        <dbReference type="HAMAP-Rule" id="MF_01015"/>
    </source>
</evidence>
<protein>
    <recommendedName>
        <fullName evidence="1">Putative transport protein YbjL</fullName>
    </recommendedName>
</protein>
<gene>
    <name evidence="1" type="primary">ybjL</name>
    <name type="ordered locus">SeHA_C1004</name>
</gene>
<reference key="1">
    <citation type="journal article" date="2011" name="J. Bacteriol.">
        <title>Comparative genomics of 28 Salmonella enterica isolates: evidence for CRISPR-mediated adaptive sublineage evolution.</title>
        <authorList>
            <person name="Fricke W.F."/>
            <person name="Mammel M.K."/>
            <person name="McDermott P.F."/>
            <person name="Tartera C."/>
            <person name="White D.G."/>
            <person name="Leclerc J.E."/>
            <person name="Ravel J."/>
            <person name="Cebula T.A."/>
        </authorList>
    </citation>
    <scope>NUCLEOTIDE SEQUENCE [LARGE SCALE GENOMIC DNA]</scope>
    <source>
        <strain>SL476</strain>
    </source>
</reference>
<dbReference type="EMBL" id="CP001120">
    <property type="protein sequence ID" value="ACF69557.1"/>
    <property type="molecule type" value="Genomic_DNA"/>
</dbReference>
<dbReference type="RefSeq" id="WP_001024853.1">
    <property type="nucleotide sequence ID" value="NC_011083.1"/>
</dbReference>
<dbReference type="SMR" id="B4TCW8"/>
<dbReference type="KEGG" id="seh:SeHA_C1004"/>
<dbReference type="HOGENOM" id="CLU_035023_2_2_6"/>
<dbReference type="Proteomes" id="UP000001866">
    <property type="component" value="Chromosome"/>
</dbReference>
<dbReference type="GO" id="GO:0005886">
    <property type="term" value="C:plasma membrane"/>
    <property type="evidence" value="ECO:0007669"/>
    <property type="project" value="UniProtKB-SubCell"/>
</dbReference>
<dbReference type="GO" id="GO:0008324">
    <property type="term" value="F:monoatomic cation transmembrane transporter activity"/>
    <property type="evidence" value="ECO:0007669"/>
    <property type="project" value="InterPro"/>
</dbReference>
<dbReference type="GO" id="GO:0006813">
    <property type="term" value="P:potassium ion transport"/>
    <property type="evidence" value="ECO:0007669"/>
    <property type="project" value="InterPro"/>
</dbReference>
<dbReference type="FunFam" id="3.30.70.1450:FF:000003">
    <property type="entry name" value="Putative transport protein YbjL"/>
    <property type="match status" value="1"/>
</dbReference>
<dbReference type="Gene3D" id="3.30.70.1450">
    <property type="entry name" value="Regulator of K+ conductance, C-terminal domain"/>
    <property type="match status" value="1"/>
</dbReference>
<dbReference type="HAMAP" id="MF_01015">
    <property type="entry name" value="YbjL"/>
    <property type="match status" value="1"/>
</dbReference>
<dbReference type="InterPro" id="IPR050144">
    <property type="entry name" value="AAE_transporter"/>
</dbReference>
<dbReference type="InterPro" id="IPR006037">
    <property type="entry name" value="RCK_C"/>
</dbReference>
<dbReference type="InterPro" id="IPR036721">
    <property type="entry name" value="RCK_C_sf"/>
</dbReference>
<dbReference type="InterPro" id="IPR023017">
    <property type="entry name" value="Transp_YbjL_put"/>
</dbReference>
<dbReference type="InterPro" id="IPR006512">
    <property type="entry name" value="YidE_YbjL"/>
</dbReference>
<dbReference type="NCBIfam" id="NF003440">
    <property type="entry name" value="PRK04972.1"/>
    <property type="match status" value="1"/>
</dbReference>
<dbReference type="NCBIfam" id="TIGR01625">
    <property type="entry name" value="YidE_YbjL_dupl"/>
    <property type="match status" value="2"/>
</dbReference>
<dbReference type="PANTHER" id="PTHR30445">
    <property type="entry name" value="K(+)_H(+) ANTIPORTER SUBUNIT KHTT"/>
    <property type="match status" value="1"/>
</dbReference>
<dbReference type="PANTHER" id="PTHR30445:SF10">
    <property type="entry name" value="TRANSPORT PROTEIN YBJL-RELATED"/>
    <property type="match status" value="1"/>
</dbReference>
<dbReference type="Pfam" id="PF06826">
    <property type="entry name" value="Asp-Al_Ex"/>
    <property type="match status" value="2"/>
</dbReference>
<dbReference type="Pfam" id="PF02080">
    <property type="entry name" value="TrkA_C"/>
    <property type="match status" value="2"/>
</dbReference>
<dbReference type="SUPFAM" id="SSF116726">
    <property type="entry name" value="TrkA C-terminal domain-like"/>
    <property type="match status" value="2"/>
</dbReference>
<dbReference type="PROSITE" id="PS51202">
    <property type="entry name" value="RCK_C"/>
    <property type="match status" value="2"/>
</dbReference>
<feature type="chain" id="PRO_1000135193" description="Putative transport protein YbjL">
    <location>
        <begin position="1"/>
        <end position="561"/>
    </location>
</feature>
<feature type="transmembrane region" description="Helical" evidence="1">
    <location>
        <begin position="8"/>
        <end position="28"/>
    </location>
</feature>
<feature type="transmembrane region" description="Helical" evidence="1">
    <location>
        <begin position="32"/>
        <end position="52"/>
    </location>
</feature>
<feature type="transmembrane region" description="Helical" evidence="1">
    <location>
        <begin position="66"/>
        <end position="86"/>
    </location>
</feature>
<feature type="transmembrane region" description="Helical" evidence="1">
    <location>
        <begin position="94"/>
        <end position="114"/>
    </location>
</feature>
<feature type="transmembrane region" description="Helical" evidence="1">
    <location>
        <begin position="158"/>
        <end position="178"/>
    </location>
</feature>
<feature type="transmembrane region" description="Helical" evidence="1">
    <location>
        <begin position="383"/>
        <end position="403"/>
    </location>
</feature>
<feature type="transmembrane region" description="Helical" evidence="1">
    <location>
        <begin position="406"/>
        <end position="426"/>
    </location>
</feature>
<feature type="transmembrane region" description="Helical" evidence="1">
    <location>
        <begin position="447"/>
        <end position="467"/>
    </location>
</feature>
<feature type="transmembrane region" description="Helical" evidence="1">
    <location>
        <begin position="475"/>
        <end position="495"/>
    </location>
</feature>
<feature type="transmembrane region" description="Helical" evidence="1">
    <location>
        <begin position="540"/>
        <end position="560"/>
    </location>
</feature>
<feature type="domain" description="RCK C-terminal 1" evidence="1">
    <location>
        <begin position="200"/>
        <end position="288"/>
    </location>
</feature>
<feature type="domain" description="RCK C-terminal 2" evidence="1">
    <location>
        <begin position="292"/>
        <end position="373"/>
    </location>
</feature>
<proteinExistence type="inferred from homology"/>
<organism>
    <name type="scientific">Salmonella heidelberg (strain SL476)</name>
    <dbReference type="NCBI Taxonomy" id="454169"/>
    <lineage>
        <taxon>Bacteria</taxon>
        <taxon>Pseudomonadati</taxon>
        <taxon>Pseudomonadota</taxon>
        <taxon>Gammaproteobacteria</taxon>
        <taxon>Enterobacterales</taxon>
        <taxon>Enterobacteriaceae</taxon>
        <taxon>Salmonella</taxon>
    </lineage>
</organism>